<keyword id="KW-1185">Reference proteome</keyword>
<dbReference type="EMBL" id="M35027">
    <property type="protein sequence ID" value="AAA48048.1"/>
    <property type="molecule type" value="Genomic_DNA"/>
</dbReference>
<dbReference type="PIR" id="A42510">
    <property type="entry name" value="A42510"/>
</dbReference>
<dbReference type="Proteomes" id="UP000008269">
    <property type="component" value="Segment"/>
</dbReference>
<organismHost>
    <name type="scientific">Homo sapiens</name>
    <name type="common">Human</name>
    <dbReference type="NCBI Taxonomy" id="9606"/>
</organismHost>
<accession>P20556</accession>
<organism>
    <name type="scientific">Vaccinia virus (strain Copenhagen)</name>
    <name type="common">VACV</name>
    <dbReference type="NCBI Taxonomy" id="10249"/>
    <lineage>
        <taxon>Viruses</taxon>
        <taxon>Varidnaviria</taxon>
        <taxon>Bamfordvirae</taxon>
        <taxon>Nucleocytoviricota</taxon>
        <taxon>Pokkesviricetes</taxon>
        <taxon>Chitovirales</taxon>
        <taxon>Poxviridae</taxon>
        <taxon>Chordopoxvirinae</taxon>
        <taxon>Orthopoxvirus</taxon>
        <taxon>Vaccinia virus</taxon>
    </lineage>
</organism>
<reference key="1">
    <citation type="journal article" date="1990" name="Virology">
        <title>The complete DNA sequence of vaccinia virus.</title>
        <authorList>
            <person name="Goebel S.J."/>
            <person name="Johnson G.P."/>
            <person name="Perkus M.E."/>
            <person name="Davis S.W."/>
            <person name="Winslow J.P."/>
            <person name="Paoletti E."/>
        </authorList>
    </citation>
    <scope>NUCLEOTIDE SEQUENCE [LARGE SCALE GENOMIC DNA]</scope>
</reference>
<reference key="2">
    <citation type="journal article" date="1990" name="Virology">
        <title>Appendix to 'The complete DNA sequence of vaccinia virus'.</title>
        <authorList>
            <person name="Goebel S.J."/>
            <person name="Johnson G.P."/>
            <person name="Perkus M.E."/>
            <person name="Davis S.W."/>
            <person name="Winslow J.P."/>
            <person name="Paoletti E."/>
        </authorList>
    </citation>
    <scope>COMPLETE GENOME</scope>
</reference>
<name>YVED_VACCC</name>
<sequence>MEVNNKKLINSFVGRAENFRRYDTYLPENDPLAMNSVFTFSSYTGIGPLYRDMRNSNFLSNPNEMG</sequence>
<protein>
    <recommendedName>
        <fullName>Uncharacterized 7.6 kDa protein</fullName>
    </recommendedName>
</protein>
<gene>
    <name type="ORF">E ORF D</name>
</gene>
<proteinExistence type="predicted"/>
<feature type="chain" id="PRO_0000099708" description="Uncharacterized 7.6 kDa protein">
    <location>
        <begin position="1"/>
        <end position="66"/>
    </location>
</feature>